<sequence>MRFDILTLFPAMFQGPLTESILKRAQQAGKITIHLHDIRDWATDRHRTVDDAPYGGGAGMVMKAEPLAAAIRAVQAADEPGGPVVLLTPDGELFNQSIARELATLPRLILVCGHYEGIDERVRERLVDREISIGDYVLTGGELAAMVVVDAVARLVPGVIDSESIVEESHSDFLLEYPHYTRPAVWEGLAVPSILLSGHHGEIARWRRSERLRRTLARRPDLLARAAAAGVLTKADLALLAEWGWDGMSEGGWMS</sequence>
<accession>B8G9R8</accession>
<keyword id="KW-0963">Cytoplasm</keyword>
<keyword id="KW-0489">Methyltransferase</keyword>
<keyword id="KW-0949">S-adenosyl-L-methionine</keyword>
<keyword id="KW-0808">Transferase</keyword>
<keyword id="KW-0819">tRNA processing</keyword>
<gene>
    <name evidence="1" type="primary">trmD</name>
    <name type="ordered locus">Cagg_3583</name>
</gene>
<dbReference type="EC" id="2.1.1.228" evidence="1"/>
<dbReference type="EMBL" id="CP001337">
    <property type="protein sequence ID" value="ACL26421.1"/>
    <property type="molecule type" value="Genomic_DNA"/>
</dbReference>
<dbReference type="RefSeq" id="WP_015942267.1">
    <property type="nucleotide sequence ID" value="NC_011831.1"/>
</dbReference>
<dbReference type="SMR" id="B8G9R8"/>
<dbReference type="STRING" id="326427.Cagg_3583"/>
<dbReference type="KEGG" id="cag:Cagg_3583"/>
<dbReference type="eggNOG" id="COG0336">
    <property type="taxonomic scope" value="Bacteria"/>
</dbReference>
<dbReference type="HOGENOM" id="CLU_047363_0_1_0"/>
<dbReference type="OrthoDB" id="9807416at2"/>
<dbReference type="Proteomes" id="UP000002508">
    <property type="component" value="Chromosome"/>
</dbReference>
<dbReference type="GO" id="GO:0005829">
    <property type="term" value="C:cytosol"/>
    <property type="evidence" value="ECO:0007669"/>
    <property type="project" value="TreeGrafter"/>
</dbReference>
<dbReference type="GO" id="GO:0052906">
    <property type="term" value="F:tRNA (guanine(37)-N1)-methyltransferase activity"/>
    <property type="evidence" value="ECO:0007669"/>
    <property type="project" value="UniProtKB-UniRule"/>
</dbReference>
<dbReference type="GO" id="GO:0002939">
    <property type="term" value="P:tRNA N1-guanine methylation"/>
    <property type="evidence" value="ECO:0007669"/>
    <property type="project" value="TreeGrafter"/>
</dbReference>
<dbReference type="CDD" id="cd18080">
    <property type="entry name" value="TrmD-like"/>
    <property type="match status" value="1"/>
</dbReference>
<dbReference type="FunFam" id="1.10.1270.20:FF:000002">
    <property type="entry name" value="tRNA (guanine-N(1)-)-methyltransferase"/>
    <property type="match status" value="1"/>
</dbReference>
<dbReference type="FunFam" id="3.40.1280.10:FF:000001">
    <property type="entry name" value="tRNA (guanine-N(1)-)-methyltransferase"/>
    <property type="match status" value="1"/>
</dbReference>
<dbReference type="Gene3D" id="3.40.1280.10">
    <property type="match status" value="1"/>
</dbReference>
<dbReference type="Gene3D" id="1.10.1270.20">
    <property type="entry name" value="tRNA(m1g37)methyltransferase, domain 2"/>
    <property type="match status" value="1"/>
</dbReference>
<dbReference type="HAMAP" id="MF_00605">
    <property type="entry name" value="TrmD"/>
    <property type="match status" value="1"/>
</dbReference>
<dbReference type="InterPro" id="IPR029028">
    <property type="entry name" value="Alpha/beta_knot_MTases"/>
</dbReference>
<dbReference type="InterPro" id="IPR023148">
    <property type="entry name" value="tRNA_m1G_MeTrfase_C_sf"/>
</dbReference>
<dbReference type="InterPro" id="IPR002649">
    <property type="entry name" value="tRNA_m1G_MeTrfase_TrmD"/>
</dbReference>
<dbReference type="InterPro" id="IPR029026">
    <property type="entry name" value="tRNA_m1G_MTases_N"/>
</dbReference>
<dbReference type="InterPro" id="IPR016009">
    <property type="entry name" value="tRNA_MeTrfase_TRMD/TRM10"/>
</dbReference>
<dbReference type="NCBIfam" id="NF000648">
    <property type="entry name" value="PRK00026.1"/>
    <property type="match status" value="1"/>
</dbReference>
<dbReference type="NCBIfam" id="TIGR00088">
    <property type="entry name" value="trmD"/>
    <property type="match status" value="1"/>
</dbReference>
<dbReference type="PANTHER" id="PTHR46417">
    <property type="entry name" value="TRNA (GUANINE-N(1)-)-METHYLTRANSFERASE"/>
    <property type="match status" value="1"/>
</dbReference>
<dbReference type="PANTHER" id="PTHR46417:SF1">
    <property type="entry name" value="TRNA (GUANINE-N(1)-)-METHYLTRANSFERASE"/>
    <property type="match status" value="1"/>
</dbReference>
<dbReference type="Pfam" id="PF01746">
    <property type="entry name" value="tRNA_m1G_MT"/>
    <property type="match status" value="1"/>
</dbReference>
<dbReference type="PIRSF" id="PIRSF000386">
    <property type="entry name" value="tRNA_mtase"/>
    <property type="match status" value="1"/>
</dbReference>
<dbReference type="SUPFAM" id="SSF75217">
    <property type="entry name" value="alpha/beta knot"/>
    <property type="match status" value="1"/>
</dbReference>
<protein>
    <recommendedName>
        <fullName evidence="1">tRNA (guanine-N(1)-)-methyltransferase</fullName>
        <ecNumber evidence="1">2.1.1.228</ecNumber>
    </recommendedName>
    <alternativeName>
        <fullName evidence="1">M1G-methyltransferase</fullName>
    </alternativeName>
    <alternativeName>
        <fullName evidence="1">tRNA [GM37] methyltransferase</fullName>
    </alternativeName>
</protein>
<proteinExistence type="inferred from homology"/>
<reference key="1">
    <citation type="submission" date="2008-12" db="EMBL/GenBank/DDBJ databases">
        <title>Complete sequence of Chloroflexus aggregans DSM 9485.</title>
        <authorList>
            <consortium name="US DOE Joint Genome Institute"/>
            <person name="Lucas S."/>
            <person name="Copeland A."/>
            <person name="Lapidus A."/>
            <person name="Glavina del Rio T."/>
            <person name="Dalin E."/>
            <person name="Tice H."/>
            <person name="Pitluck S."/>
            <person name="Foster B."/>
            <person name="Larimer F."/>
            <person name="Land M."/>
            <person name="Hauser L."/>
            <person name="Kyrpides N."/>
            <person name="Mikhailova N."/>
            <person name="Bryant D.A."/>
            <person name="Richardson P."/>
        </authorList>
    </citation>
    <scope>NUCLEOTIDE SEQUENCE [LARGE SCALE GENOMIC DNA]</scope>
    <source>
        <strain>MD-66 / DSM 9485</strain>
    </source>
</reference>
<name>TRMD_CHLAD</name>
<organism>
    <name type="scientific">Chloroflexus aggregans (strain MD-66 / DSM 9485)</name>
    <dbReference type="NCBI Taxonomy" id="326427"/>
    <lineage>
        <taxon>Bacteria</taxon>
        <taxon>Bacillati</taxon>
        <taxon>Chloroflexota</taxon>
        <taxon>Chloroflexia</taxon>
        <taxon>Chloroflexales</taxon>
        <taxon>Chloroflexineae</taxon>
        <taxon>Chloroflexaceae</taxon>
        <taxon>Chloroflexus</taxon>
    </lineage>
</organism>
<feature type="chain" id="PRO_1000147078" description="tRNA (guanine-N(1)-)-methyltransferase">
    <location>
        <begin position="1"/>
        <end position="255"/>
    </location>
</feature>
<feature type="binding site" evidence="1">
    <location>
        <position position="113"/>
    </location>
    <ligand>
        <name>S-adenosyl-L-methionine</name>
        <dbReference type="ChEBI" id="CHEBI:59789"/>
    </ligand>
</feature>
<feature type="binding site" evidence="1">
    <location>
        <begin position="133"/>
        <end position="138"/>
    </location>
    <ligand>
        <name>S-adenosyl-L-methionine</name>
        <dbReference type="ChEBI" id="CHEBI:59789"/>
    </ligand>
</feature>
<comment type="function">
    <text evidence="1">Specifically methylates guanosine-37 in various tRNAs.</text>
</comment>
<comment type="catalytic activity">
    <reaction evidence="1">
        <text>guanosine(37) in tRNA + S-adenosyl-L-methionine = N(1)-methylguanosine(37) in tRNA + S-adenosyl-L-homocysteine + H(+)</text>
        <dbReference type="Rhea" id="RHEA:36899"/>
        <dbReference type="Rhea" id="RHEA-COMP:10145"/>
        <dbReference type="Rhea" id="RHEA-COMP:10147"/>
        <dbReference type="ChEBI" id="CHEBI:15378"/>
        <dbReference type="ChEBI" id="CHEBI:57856"/>
        <dbReference type="ChEBI" id="CHEBI:59789"/>
        <dbReference type="ChEBI" id="CHEBI:73542"/>
        <dbReference type="ChEBI" id="CHEBI:74269"/>
        <dbReference type="EC" id="2.1.1.228"/>
    </reaction>
</comment>
<comment type="subunit">
    <text evidence="1">Homodimer.</text>
</comment>
<comment type="subcellular location">
    <subcellularLocation>
        <location evidence="1">Cytoplasm</location>
    </subcellularLocation>
</comment>
<comment type="similarity">
    <text evidence="1">Belongs to the RNA methyltransferase TrmD family.</text>
</comment>
<evidence type="ECO:0000255" key="1">
    <source>
        <dbReference type="HAMAP-Rule" id="MF_00605"/>
    </source>
</evidence>